<dbReference type="EMBL" id="U89162">
    <property type="protein sequence ID" value="AAC62307.1"/>
    <property type="molecule type" value="mRNA"/>
</dbReference>
<dbReference type="EMBL" id="AE014296">
    <property type="protein sequence ID" value="AAF49412.1"/>
    <property type="molecule type" value="Genomic_DNA"/>
</dbReference>
<dbReference type="EMBL" id="AF132551">
    <property type="protein sequence ID" value="AAD27850.1"/>
    <property type="molecule type" value="mRNA"/>
</dbReference>
<dbReference type="RefSeq" id="NP_477385.1">
    <property type="nucleotide sequence ID" value="NM_058037.5"/>
</dbReference>
<dbReference type="SMR" id="O77410"/>
<dbReference type="BioGRID" id="65176">
    <property type="interactions" value="17"/>
</dbReference>
<dbReference type="DIP" id="DIP-19544N"/>
<dbReference type="FunCoup" id="O77410">
    <property type="interactions" value="2614"/>
</dbReference>
<dbReference type="IntAct" id="O77410">
    <property type="interactions" value="7"/>
</dbReference>
<dbReference type="STRING" id="7227.FBpp0075104"/>
<dbReference type="PaxDb" id="7227-FBpp0075104"/>
<dbReference type="DNASU" id="39877"/>
<dbReference type="EnsemblMetazoa" id="FBtr0075345">
    <property type="protein sequence ID" value="FBpp0075104"/>
    <property type="gene ID" value="FBgn0025582"/>
</dbReference>
<dbReference type="GeneID" id="39877"/>
<dbReference type="KEGG" id="dme:Dmel_CG9677"/>
<dbReference type="AGR" id="FB:FBgn0025582"/>
<dbReference type="CTD" id="3646"/>
<dbReference type="FlyBase" id="FBgn0025582">
    <property type="gene designation" value="eIF3e"/>
</dbReference>
<dbReference type="VEuPathDB" id="VectorBase:FBgn0025582"/>
<dbReference type="eggNOG" id="KOG2758">
    <property type="taxonomic scope" value="Eukaryota"/>
</dbReference>
<dbReference type="GeneTree" id="ENSGT00390000002661"/>
<dbReference type="HOGENOM" id="CLU_031132_0_0_1"/>
<dbReference type="InParanoid" id="O77410"/>
<dbReference type="OMA" id="NCPWILR"/>
<dbReference type="OrthoDB" id="417252at2759"/>
<dbReference type="PhylomeDB" id="O77410"/>
<dbReference type="Reactome" id="R-DME-156827">
    <property type="pathway name" value="L13a-mediated translational silencing of Ceruloplasmin expression"/>
</dbReference>
<dbReference type="Reactome" id="R-DME-72649">
    <property type="pathway name" value="Translation initiation complex formation"/>
</dbReference>
<dbReference type="Reactome" id="R-DME-72689">
    <property type="pathway name" value="Formation of a pool of free 40S subunits"/>
</dbReference>
<dbReference type="Reactome" id="R-DME-72695">
    <property type="pathway name" value="Formation of the ternary complex, and subsequently, the 43S complex"/>
</dbReference>
<dbReference type="Reactome" id="R-DME-72702">
    <property type="pathway name" value="Ribosomal scanning and start codon recognition"/>
</dbReference>
<dbReference type="SignaLink" id="O77410"/>
<dbReference type="BioGRID-ORCS" id="39877">
    <property type="hits" value="1 hit in 1 CRISPR screen"/>
</dbReference>
<dbReference type="GenomeRNAi" id="39877"/>
<dbReference type="PRO" id="PR:O77410"/>
<dbReference type="Proteomes" id="UP000000803">
    <property type="component" value="Chromosome 3L"/>
</dbReference>
<dbReference type="Bgee" id="FBgn0025582">
    <property type="expression patterns" value="Expressed in adult enteroendocrine precursor cell in adult midgut (Drosophila) and 193 other cell types or tissues"/>
</dbReference>
<dbReference type="ExpressionAtlas" id="O77410">
    <property type="expression patterns" value="baseline and differential"/>
</dbReference>
<dbReference type="GO" id="GO:0005783">
    <property type="term" value="C:endoplasmic reticulum"/>
    <property type="evidence" value="ECO:0007669"/>
    <property type="project" value="UniProtKB-SubCell"/>
</dbReference>
<dbReference type="GO" id="GO:0016282">
    <property type="term" value="C:eukaryotic 43S preinitiation complex"/>
    <property type="evidence" value="ECO:0007669"/>
    <property type="project" value="UniProtKB-UniRule"/>
</dbReference>
<dbReference type="GO" id="GO:0033290">
    <property type="term" value="C:eukaryotic 48S preinitiation complex"/>
    <property type="evidence" value="ECO:0007669"/>
    <property type="project" value="UniProtKB-UniRule"/>
</dbReference>
<dbReference type="GO" id="GO:0005852">
    <property type="term" value="C:eukaryotic translation initiation factor 3 complex"/>
    <property type="evidence" value="ECO:0000250"/>
    <property type="project" value="FlyBase"/>
</dbReference>
<dbReference type="GO" id="GO:0071540">
    <property type="term" value="C:eukaryotic translation initiation factor 3 complex, eIF3e"/>
    <property type="evidence" value="ECO:0007669"/>
    <property type="project" value="UniProtKB-UniRule"/>
</dbReference>
<dbReference type="GO" id="GO:0043231">
    <property type="term" value="C:intracellular membrane-bounded organelle"/>
    <property type="evidence" value="ECO:0000314"/>
    <property type="project" value="FlyBase"/>
</dbReference>
<dbReference type="GO" id="GO:0005634">
    <property type="term" value="C:nucleus"/>
    <property type="evidence" value="ECO:0000318"/>
    <property type="project" value="GO_Central"/>
</dbReference>
<dbReference type="GO" id="GO:0003743">
    <property type="term" value="F:translation initiation factor activity"/>
    <property type="evidence" value="ECO:0000250"/>
    <property type="project" value="FlyBase"/>
</dbReference>
<dbReference type="GO" id="GO:0001732">
    <property type="term" value="P:formation of cytoplasmic translation initiation complex"/>
    <property type="evidence" value="ECO:0007669"/>
    <property type="project" value="UniProtKB-UniRule"/>
</dbReference>
<dbReference type="GO" id="GO:0006413">
    <property type="term" value="P:translational initiation"/>
    <property type="evidence" value="ECO:0000250"/>
    <property type="project" value="FlyBase"/>
</dbReference>
<dbReference type="CDD" id="cd21378">
    <property type="entry name" value="eIF3E"/>
    <property type="match status" value="1"/>
</dbReference>
<dbReference type="HAMAP" id="MF_03004">
    <property type="entry name" value="eIF3e"/>
    <property type="match status" value="1"/>
</dbReference>
<dbReference type="InterPro" id="IPR016650">
    <property type="entry name" value="eIF3e"/>
</dbReference>
<dbReference type="InterPro" id="IPR019010">
    <property type="entry name" value="eIF3e_N"/>
</dbReference>
<dbReference type="InterPro" id="IPR000717">
    <property type="entry name" value="PCI_dom"/>
</dbReference>
<dbReference type="InterPro" id="IPR036390">
    <property type="entry name" value="WH_DNA-bd_sf"/>
</dbReference>
<dbReference type="PANTHER" id="PTHR10317">
    <property type="entry name" value="EUKARYOTIC TRANSLATION INITIATION FACTOR 3 SUBUNIT E"/>
    <property type="match status" value="1"/>
</dbReference>
<dbReference type="Pfam" id="PF09440">
    <property type="entry name" value="eIF3_N"/>
    <property type="match status" value="1"/>
</dbReference>
<dbReference type="Pfam" id="PF01399">
    <property type="entry name" value="PCI"/>
    <property type="match status" value="1"/>
</dbReference>
<dbReference type="PIRSF" id="PIRSF016255">
    <property type="entry name" value="eIF3e_su6"/>
    <property type="match status" value="1"/>
</dbReference>
<dbReference type="SMART" id="SM01186">
    <property type="entry name" value="eIF3_N"/>
    <property type="match status" value="1"/>
</dbReference>
<dbReference type="SMART" id="SM00088">
    <property type="entry name" value="PINT"/>
    <property type="match status" value="1"/>
</dbReference>
<dbReference type="SUPFAM" id="SSF46785">
    <property type="entry name" value="Winged helix' DNA-binding domain"/>
    <property type="match status" value="1"/>
</dbReference>
<dbReference type="PROSITE" id="PS50250">
    <property type="entry name" value="PCI"/>
    <property type="match status" value="1"/>
</dbReference>
<accession>O77410</accession>
<accession>Q9VVA2</accession>
<organism>
    <name type="scientific">Drosophila melanogaster</name>
    <name type="common">Fruit fly</name>
    <dbReference type="NCBI Taxonomy" id="7227"/>
    <lineage>
        <taxon>Eukaryota</taxon>
        <taxon>Metazoa</taxon>
        <taxon>Ecdysozoa</taxon>
        <taxon>Arthropoda</taxon>
        <taxon>Hexapoda</taxon>
        <taxon>Insecta</taxon>
        <taxon>Pterygota</taxon>
        <taxon>Neoptera</taxon>
        <taxon>Endopterygota</taxon>
        <taxon>Diptera</taxon>
        <taxon>Brachycera</taxon>
        <taxon>Muscomorpha</taxon>
        <taxon>Ephydroidea</taxon>
        <taxon>Drosophilidae</taxon>
        <taxon>Drosophila</taxon>
        <taxon>Sophophora</taxon>
    </lineage>
</organism>
<comment type="function">
    <text evidence="1 4 6">Component of the eukaryotic translation initiation factor 3 (eIF-3) complex, which is involved in protein synthesis of a specialized repertoire of mRNAs and, together with other initiation factors, stimulates binding of mRNA and methionyl-tRNAi to the 40S ribosome. The eIF-3 complex specifically targets and initiates translation of a subset of mRNAs involved in cell proliferation (PubMed:18493598). In addition to its role in the eIF-3 complex, also functions in protein ubiquitination and degradation (PubMed:18493598, PubMed:28505193). During mitosis required for regulating mitotic microtubule growth and kinetochore formation, and consequently is required for satisfying the spindle assembly checkpoint (SAC) during metaphase to prevent delays in mitotic progression (PubMed:28505193). This is likely by promoting the ubiquitination and degradation of Klp67A, a kinesin-like protein that suppresses microtubule polymerization at plus ends (PubMed:28505193). Acts in the COP9 signalosome (CSN) mediated regulation of cullin neddylation by promoting Cul1 and Cul3 neddylation and negatively regulating the CSN complex subunit CSN5 (PubMed:18493598).</text>
</comment>
<comment type="subunit">
    <text evidence="1 5">Component of the eukaryotic translation initiation factor 3 (eIF-3) complex. The eIF-3 complex interacts with pix. Interacts with mxt (PubMed:23716590).</text>
</comment>
<comment type="subcellular location">
    <subcellularLocation>
        <location evidence="1 6">Cytoplasm</location>
    </subcellularLocation>
    <subcellularLocation>
        <location evidence="3">Microsome</location>
    </subcellularLocation>
    <subcellularLocation>
        <location evidence="3">Endoplasmic reticulum</location>
    </subcellularLocation>
    <text evidence="6">Uniformly distributed in interphase and mitotic cells.</text>
</comment>
<comment type="tissue specificity">
    <text evidence="3">Expression levels in females and males are relatively similar 10 days after oviposition, however by day 15 expression is higher in gravid females than in males (at protein level).</text>
</comment>
<comment type="developmental stage">
    <text evidence="3">Expressed throughout development and in adults (at protein level). Expression peaks in early embryos (2 hours after oviposition), then steadily decreases over the embryonic and larval stages (at protein level). Expression increases again 5 days after oviposition and remains stable until day 10 (at protein level).</text>
</comment>
<comment type="disruption phenotype">
    <text evidence="4">Homozygous lethal at the first instar larval stage. Larvae are smaller than wild-type and die 3-4 days after hatching.</text>
</comment>
<comment type="similarity">
    <text evidence="1">Belongs to the eIF-3 subunit E family.</text>
</comment>
<gene>
    <name evidence="1" type="primary">eIF3e</name>
    <name evidence="7" type="synonym">eIF-3p48</name>
    <name evidence="1" type="synonym">eIF3-S6</name>
    <name evidence="1 7" type="synonym">Int6</name>
    <name evidence="8" type="ORF">CG9677</name>
</gene>
<keyword id="KW-0963">Cytoplasm</keyword>
<keyword id="KW-0256">Endoplasmic reticulum</keyword>
<keyword id="KW-0396">Initiation factor</keyword>
<keyword id="KW-0492">Microsome</keyword>
<keyword id="KW-0648">Protein biosynthesis</keyword>
<keyword id="KW-1185">Reference proteome</keyword>
<sequence>MANFDLTRINCQFLDRHLTFPLLEFLCGKEIYNQQELLEYILETVNKTNMIDYTMDTRKRLNLSQEMPEELVQRKAEVLATLKQLQNEVAPIMKATDILKNGESMKDSKTFVNALQKDYNFKVEHLESAYKLAKYLYECGNYQESTSYLYFCLIVMSPNDKNYLNVLWGKLAAEILTLNWNTALEDLTRLRDYIDNANFSTIQALQQRTWLIHWSVLVFFNHPKGRDLIIEMFLYKPLYLNAIQTMCPHIMRYLATAVVINRTRRNALKDLIKVIQQESYTYRDPITEFLECLYVNFDFEGARLKLHECQTVILNDFFIVACLNEFVEDARLMIFETFCRIHQCITISMLADKLNMKPNEAECWIVNLIRNARLNAKIDSKLGHVVMGTQPLSPYQQLVEKIDSLSMRSEHLAGLIERKSKQKQNQESADSWKYY</sequence>
<feature type="chain" id="PRO_0000123517" description="Eukaryotic translation initiation factor 3 subunit E">
    <location>
        <begin position="1"/>
        <end position="435"/>
    </location>
</feature>
<feature type="domain" description="PCI" evidence="2">
    <location>
        <begin position="219"/>
        <end position="392"/>
    </location>
</feature>
<name>EIF3E_DROME</name>
<evidence type="ECO:0000255" key="1">
    <source>
        <dbReference type="HAMAP-Rule" id="MF_03004"/>
    </source>
</evidence>
<evidence type="ECO:0000255" key="2">
    <source>
        <dbReference type="PROSITE-ProRule" id="PRU01185"/>
    </source>
</evidence>
<evidence type="ECO:0000269" key="3">
    <source>
    </source>
</evidence>
<evidence type="ECO:0000269" key="4">
    <source>
    </source>
</evidence>
<evidence type="ECO:0000269" key="5">
    <source>
    </source>
</evidence>
<evidence type="ECO:0000269" key="6">
    <source>
    </source>
</evidence>
<evidence type="ECO:0000303" key="7">
    <source>
    </source>
</evidence>
<evidence type="ECO:0000312" key="8">
    <source>
        <dbReference type="FlyBase" id="FBgn0025582"/>
    </source>
</evidence>
<proteinExistence type="evidence at protein level"/>
<protein>
    <recommendedName>
        <fullName evidence="1">Eukaryotic translation initiation factor 3 subunit E</fullName>
        <shortName evidence="1">eIF3e</shortName>
    </recommendedName>
    <alternativeName>
        <fullName evidence="1">Eukaryotic translation initiation factor 3 subunit 6</fullName>
    </alternativeName>
</protein>
<reference key="1">
    <citation type="journal article" date="1999" name="Gene">
        <title>Characterization of the Drosophila ortholog of mouse eIF-3p48/INT-6.</title>
        <authorList>
            <person name="Miyazaki S."/>
            <person name="Rasmussen S."/>
            <person name="Imatani A."/>
            <person name="Diella F."/>
            <person name="Sullivan D.T."/>
            <person name="Callahan R."/>
        </authorList>
    </citation>
    <scope>NUCLEOTIDE SEQUENCE [MRNA]</scope>
    <scope>SUBCELLULAR LOCATION</scope>
    <scope>TISSUE SPECIFICITY</scope>
    <scope>DEVELOPMENTAL STAGE</scope>
    <source>
        <tissue>Embryo</tissue>
    </source>
</reference>
<reference key="2">
    <citation type="journal article" date="2000" name="Science">
        <title>The genome sequence of Drosophila melanogaster.</title>
        <authorList>
            <person name="Adams M.D."/>
            <person name="Celniker S.E."/>
            <person name="Holt R.A."/>
            <person name="Evans C.A."/>
            <person name="Gocayne J.D."/>
            <person name="Amanatides P.G."/>
            <person name="Scherer S.E."/>
            <person name="Li P.W."/>
            <person name="Hoskins R.A."/>
            <person name="Galle R.F."/>
            <person name="George R.A."/>
            <person name="Lewis S.E."/>
            <person name="Richards S."/>
            <person name="Ashburner M."/>
            <person name="Henderson S.N."/>
            <person name="Sutton G.G."/>
            <person name="Wortman J.R."/>
            <person name="Yandell M.D."/>
            <person name="Zhang Q."/>
            <person name="Chen L.X."/>
            <person name="Brandon R.C."/>
            <person name="Rogers Y.-H.C."/>
            <person name="Blazej R.G."/>
            <person name="Champe M."/>
            <person name="Pfeiffer B.D."/>
            <person name="Wan K.H."/>
            <person name="Doyle C."/>
            <person name="Baxter E.G."/>
            <person name="Helt G."/>
            <person name="Nelson C.R."/>
            <person name="Miklos G.L.G."/>
            <person name="Abril J.F."/>
            <person name="Agbayani A."/>
            <person name="An H.-J."/>
            <person name="Andrews-Pfannkoch C."/>
            <person name="Baldwin D."/>
            <person name="Ballew R.M."/>
            <person name="Basu A."/>
            <person name="Baxendale J."/>
            <person name="Bayraktaroglu L."/>
            <person name="Beasley E.M."/>
            <person name="Beeson K.Y."/>
            <person name="Benos P.V."/>
            <person name="Berman B.P."/>
            <person name="Bhandari D."/>
            <person name="Bolshakov S."/>
            <person name="Borkova D."/>
            <person name="Botchan M.R."/>
            <person name="Bouck J."/>
            <person name="Brokstein P."/>
            <person name="Brottier P."/>
            <person name="Burtis K.C."/>
            <person name="Busam D.A."/>
            <person name="Butler H."/>
            <person name="Cadieu E."/>
            <person name="Center A."/>
            <person name="Chandra I."/>
            <person name="Cherry J.M."/>
            <person name="Cawley S."/>
            <person name="Dahlke C."/>
            <person name="Davenport L.B."/>
            <person name="Davies P."/>
            <person name="de Pablos B."/>
            <person name="Delcher A."/>
            <person name="Deng Z."/>
            <person name="Mays A.D."/>
            <person name="Dew I."/>
            <person name="Dietz S.M."/>
            <person name="Dodson K."/>
            <person name="Doup L.E."/>
            <person name="Downes M."/>
            <person name="Dugan-Rocha S."/>
            <person name="Dunkov B.C."/>
            <person name="Dunn P."/>
            <person name="Durbin K.J."/>
            <person name="Evangelista C.C."/>
            <person name="Ferraz C."/>
            <person name="Ferriera S."/>
            <person name="Fleischmann W."/>
            <person name="Fosler C."/>
            <person name="Gabrielian A.E."/>
            <person name="Garg N.S."/>
            <person name="Gelbart W.M."/>
            <person name="Glasser K."/>
            <person name="Glodek A."/>
            <person name="Gong F."/>
            <person name="Gorrell J.H."/>
            <person name="Gu Z."/>
            <person name="Guan P."/>
            <person name="Harris M."/>
            <person name="Harris N.L."/>
            <person name="Harvey D.A."/>
            <person name="Heiman T.J."/>
            <person name="Hernandez J.R."/>
            <person name="Houck J."/>
            <person name="Hostin D."/>
            <person name="Houston K.A."/>
            <person name="Howland T.J."/>
            <person name="Wei M.-H."/>
            <person name="Ibegwam C."/>
            <person name="Jalali M."/>
            <person name="Kalush F."/>
            <person name="Karpen G.H."/>
            <person name="Ke Z."/>
            <person name="Kennison J.A."/>
            <person name="Ketchum K.A."/>
            <person name="Kimmel B.E."/>
            <person name="Kodira C.D."/>
            <person name="Kraft C.L."/>
            <person name="Kravitz S."/>
            <person name="Kulp D."/>
            <person name="Lai Z."/>
            <person name="Lasko P."/>
            <person name="Lei Y."/>
            <person name="Levitsky A.A."/>
            <person name="Li J.H."/>
            <person name="Li Z."/>
            <person name="Liang Y."/>
            <person name="Lin X."/>
            <person name="Liu X."/>
            <person name="Mattei B."/>
            <person name="McIntosh T.C."/>
            <person name="McLeod M.P."/>
            <person name="McPherson D."/>
            <person name="Merkulov G."/>
            <person name="Milshina N.V."/>
            <person name="Mobarry C."/>
            <person name="Morris J."/>
            <person name="Moshrefi A."/>
            <person name="Mount S.M."/>
            <person name="Moy M."/>
            <person name="Murphy B."/>
            <person name="Murphy L."/>
            <person name="Muzny D.M."/>
            <person name="Nelson D.L."/>
            <person name="Nelson D.R."/>
            <person name="Nelson K.A."/>
            <person name="Nixon K."/>
            <person name="Nusskern D.R."/>
            <person name="Pacleb J.M."/>
            <person name="Palazzolo M."/>
            <person name="Pittman G.S."/>
            <person name="Pan S."/>
            <person name="Pollard J."/>
            <person name="Puri V."/>
            <person name="Reese M.G."/>
            <person name="Reinert K."/>
            <person name="Remington K."/>
            <person name="Saunders R.D.C."/>
            <person name="Scheeler F."/>
            <person name="Shen H."/>
            <person name="Shue B.C."/>
            <person name="Siden-Kiamos I."/>
            <person name="Simpson M."/>
            <person name="Skupski M.P."/>
            <person name="Smith T.J."/>
            <person name="Spier E."/>
            <person name="Spradling A.C."/>
            <person name="Stapleton M."/>
            <person name="Strong R."/>
            <person name="Sun E."/>
            <person name="Svirskas R."/>
            <person name="Tector C."/>
            <person name="Turner R."/>
            <person name="Venter E."/>
            <person name="Wang A.H."/>
            <person name="Wang X."/>
            <person name="Wang Z.-Y."/>
            <person name="Wassarman D.A."/>
            <person name="Weinstock G.M."/>
            <person name="Weissenbach J."/>
            <person name="Williams S.M."/>
            <person name="Woodage T."/>
            <person name="Worley K.C."/>
            <person name="Wu D."/>
            <person name="Yang S."/>
            <person name="Yao Q.A."/>
            <person name="Ye J."/>
            <person name="Yeh R.-F."/>
            <person name="Zaveri J.S."/>
            <person name="Zhan M."/>
            <person name="Zhang G."/>
            <person name="Zhao Q."/>
            <person name="Zheng L."/>
            <person name="Zheng X.H."/>
            <person name="Zhong F.N."/>
            <person name="Zhong W."/>
            <person name="Zhou X."/>
            <person name="Zhu S.C."/>
            <person name="Zhu X."/>
            <person name="Smith H.O."/>
            <person name="Gibbs R.A."/>
            <person name="Myers E.W."/>
            <person name="Rubin G.M."/>
            <person name="Venter J.C."/>
        </authorList>
    </citation>
    <scope>NUCLEOTIDE SEQUENCE [LARGE SCALE GENOMIC DNA]</scope>
    <source>
        <strain>Berkeley</strain>
    </source>
</reference>
<reference key="3">
    <citation type="journal article" date="2002" name="Genome Biol.">
        <title>Annotation of the Drosophila melanogaster euchromatic genome: a systematic review.</title>
        <authorList>
            <person name="Misra S."/>
            <person name="Crosby M.A."/>
            <person name="Mungall C.J."/>
            <person name="Matthews B.B."/>
            <person name="Campbell K.S."/>
            <person name="Hradecky P."/>
            <person name="Huang Y."/>
            <person name="Kaminker J.S."/>
            <person name="Millburn G.H."/>
            <person name="Prochnik S.E."/>
            <person name="Smith C.D."/>
            <person name="Tupy J.L."/>
            <person name="Whitfield E.J."/>
            <person name="Bayraktaroglu L."/>
            <person name="Berman B.P."/>
            <person name="Bettencourt B.R."/>
            <person name="Celniker S.E."/>
            <person name="de Grey A.D.N.J."/>
            <person name="Drysdale R.A."/>
            <person name="Harris N.L."/>
            <person name="Richter J."/>
            <person name="Russo S."/>
            <person name="Schroeder A.J."/>
            <person name="Shu S.Q."/>
            <person name="Stapleton M."/>
            <person name="Yamada C."/>
            <person name="Ashburner M."/>
            <person name="Gelbart W.M."/>
            <person name="Rubin G.M."/>
            <person name="Lewis S.E."/>
        </authorList>
    </citation>
    <scope>GENOME REANNOTATION</scope>
    <source>
        <strain>Berkeley</strain>
    </source>
</reference>
<reference key="4">
    <citation type="journal article" date="2000" name="Science">
        <title>A Drosophila complementary DNA resource.</title>
        <authorList>
            <person name="Rubin G.M."/>
            <person name="Hong L."/>
            <person name="Brokstein P."/>
            <person name="Evans-Holm M."/>
            <person name="Frise E."/>
            <person name="Stapleton M."/>
            <person name="Harvey D.A."/>
        </authorList>
    </citation>
    <scope>NUCLEOTIDE SEQUENCE [LARGE SCALE MRNA]</scope>
    <source>
        <strain>Berkeley</strain>
        <tissue>Ovary</tissue>
    </source>
</reference>
<reference key="5">
    <citation type="journal article" date="2008" name="PLoS ONE">
        <title>The proto-oncogene Int6 is essential for neddylation of Cul1 and Cul3 in Drosophila.</title>
        <authorList>
            <person name="Rencus-Lazar S."/>
            <person name="Amir Y."/>
            <person name="Wu J."/>
            <person name="Chien C.T."/>
            <person name="Chamovitz D.A."/>
            <person name="Segal D."/>
        </authorList>
    </citation>
    <scope>FUNCTION</scope>
    <scope>DISRUPTION PHENOTYPE</scope>
</reference>
<reference key="6">
    <citation type="journal article" date="2013" name="Mol. Cell. Biol.">
        <title>Mextli is a novel eukaryotic translation initiation factor 4E-binding protein that promotes translation in Drosophila melanogaster.</title>
        <authorList>
            <person name="Hernandez G."/>
            <person name="Miron M."/>
            <person name="Han H."/>
            <person name="Liu N."/>
            <person name="Magescas J."/>
            <person name="Tettweiler G."/>
            <person name="Frank F."/>
            <person name="Siddiqui N."/>
            <person name="Sonenberg N."/>
            <person name="Lasko P."/>
        </authorList>
    </citation>
    <scope>INTERACTION WITH MXT</scope>
</reference>
<reference key="7">
    <citation type="journal article" date="2017" name="PLoS Genet.">
        <title>The Drosophila orthologue of the INT6 onco-protein regulates mitotic microtubule growth and kinetochore structure.</title>
        <authorList>
            <person name="Renda F."/>
            <person name="Pellacani C."/>
            <person name="Strunov A."/>
            <person name="Bucciarelli E."/>
            <person name="Naim V."/>
            <person name="Bosso G."/>
            <person name="Kiseleva E."/>
            <person name="Bonaccorsi S."/>
            <person name="Sharp D.J."/>
            <person name="Khodjakov A."/>
            <person name="Gatti M."/>
            <person name="Somma M.P."/>
        </authorList>
    </citation>
    <scope>FUNCTION</scope>
    <scope>SUBCELLULAR LOCATION</scope>
</reference>